<feature type="chain" id="PRO_0000047920" description="DNA-directed RNA polymerase subunit beta">
    <location>
        <begin position="1"/>
        <end position="1178"/>
    </location>
</feature>
<feature type="region of interest" description="Disordered" evidence="2">
    <location>
        <begin position="1"/>
        <end position="37"/>
    </location>
</feature>
<feature type="compositionally biased region" description="Low complexity" evidence="2">
    <location>
        <begin position="17"/>
        <end position="33"/>
    </location>
</feature>
<feature type="sequence conflict" description="In Ref. 1; CAA78668." evidence="3" ref="1">
    <original>FLEPRVL</original>
    <variation>SSSRACW</variation>
    <location>
        <begin position="554"/>
        <end position="560"/>
    </location>
</feature>
<feature type="sequence conflict" description="In Ref. 1; CAA78668." evidence="3" ref="1">
    <original>A</original>
    <variation>R</variation>
    <location>
        <position position="623"/>
    </location>
</feature>
<feature type="sequence conflict" description="In Ref. 1; CAA78668." evidence="3" ref="1">
    <original>MPWEGHNY</original>
    <variation>NAVGGSTTN</variation>
    <location>
        <begin position="724"/>
        <end position="731"/>
    </location>
</feature>
<accession>P30760</accession>
<comment type="function">
    <text evidence="1">DNA-dependent RNA polymerase catalyzes the transcription of DNA into RNA using the four ribonucleoside triphosphates as substrates.</text>
</comment>
<comment type="catalytic activity">
    <reaction evidence="1">
        <text>RNA(n) + a ribonucleoside 5'-triphosphate = RNA(n+1) + diphosphate</text>
        <dbReference type="Rhea" id="RHEA:21248"/>
        <dbReference type="Rhea" id="RHEA-COMP:14527"/>
        <dbReference type="Rhea" id="RHEA-COMP:17342"/>
        <dbReference type="ChEBI" id="CHEBI:33019"/>
        <dbReference type="ChEBI" id="CHEBI:61557"/>
        <dbReference type="ChEBI" id="CHEBI:140395"/>
        <dbReference type="EC" id="2.7.7.6"/>
    </reaction>
</comment>
<comment type="subunit">
    <text evidence="1">The RNAP catalytic core consists of 2 alpha, 1 beta, 1 beta' and 1 omega subunit. When a sigma factor is associated with the core the holoenzyme is formed, which can initiate transcription.</text>
</comment>
<comment type="similarity">
    <text evidence="1">Belongs to the RNA polymerase beta chain family.</text>
</comment>
<keyword id="KW-0240">DNA-directed RNA polymerase</keyword>
<keyword id="KW-0548">Nucleotidyltransferase</keyword>
<keyword id="KW-1185">Reference proteome</keyword>
<keyword id="KW-0804">Transcription</keyword>
<keyword id="KW-0808">Transferase</keyword>
<gene>
    <name evidence="1" type="primary">rpoB</name>
    <name type="ordered locus">ML1891</name>
</gene>
<evidence type="ECO:0000255" key="1">
    <source>
        <dbReference type="HAMAP-Rule" id="MF_01321"/>
    </source>
</evidence>
<evidence type="ECO:0000256" key="2">
    <source>
        <dbReference type="SAM" id="MobiDB-lite"/>
    </source>
</evidence>
<evidence type="ECO:0000305" key="3"/>
<reference key="1">
    <citation type="journal article" date="1993" name="Mol. Microbiol.">
        <title>Nucleotide sequence of the first cosmid from the Mycobacterium leprae genome project: structure and function of the Rif-Str regions.</title>
        <authorList>
            <person name="Honore N.T."/>
            <person name="Bergh S."/>
            <person name="Chanteau S."/>
            <person name="Doucet-Populaire F."/>
            <person name="Eiglmeier K."/>
            <person name="Garnier T."/>
            <person name="Georges C."/>
            <person name="Launois P."/>
            <person name="Limpaiboon T."/>
            <person name="Newton S."/>
            <person name="Niang K."/>
            <person name="del Portillo P."/>
            <person name="Ramesh G.R."/>
            <person name="Reddi P."/>
            <person name="Ridel P.R."/>
            <person name="Sittisombut N."/>
            <person name="Wu-Hunter S."/>
            <person name="Cole S.T."/>
        </authorList>
    </citation>
    <scope>NUCLEOTIDE SEQUENCE [GENOMIC DNA]</scope>
</reference>
<reference key="2">
    <citation type="journal article" date="2001" name="Nature">
        <title>Massive gene decay in the leprosy bacillus.</title>
        <authorList>
            <person name="Cole S.T."/>
            <person name="Eiglmeier K."/>
            <person name="Parkhill J."/>
            <person name="James K.D."/>
            <person name="Thomson N.R."/>
            <person name="Wheeler P.R."/>
            <person name="Honore N."/>
            <person name="Garnier T."/>
            <person name="Churcher C.M."/>
            <person name="Harris D.E."/>
            <person name="Mungall K.L."/>
            <person name="Basham D."/>
            <person name="Brown D."/>
            <person name="Chillingworth T."/>
            <person name="Connor R."/>
            <person name="Davies R.M."/>
            <person name="Devlin K."/>
            <person name="Duthoy S."/>
            <person name="Feltwell T."/>
            <person name="Fraser A."/>
            <person name="Hamlin N."/>
            <person name="Holroyd S."/>
            <person name="Hornsby T."/>
            <person name="Jagels K."/>
            <person name="Lacroix C."/>
            <person name="Maclean J."/>
            <person name="Moule S."/>
            <person name="Murphy L.D."/>
            <person name="Oliver K."/>
            <person name="Quail M.A."/>
            <person name="Rajandream M.A."/>
            <person name="Rutherford K.M."/>
            <person name="Rutter S."/>
            <person name="Seeger K."/>
            <person name="Simon S."/>
            <person name="Simmonds M."/>
            <person name="Skelton J."/>
            <person name="Squares R."/>
            <person name="Squares S."/>
            <person name="Stevens K."/>
            <person name="Taylor K."/>
            <person name="Whitehead S."/>
            <person name="Woodward J.R."/>
            <person name="Barrell B.G."/>
        </authorList>
    </citation>
    <scope>NUCLEOTIDE SEQUENCE [LARGE SCALE GENOMIC DNA]</scope>
    <source>
        <strain>TN</strain>
    </source>
</reference>
<protein>
    <recommendedName>
        <fullName evidence="1">DNA-directed RNA polymerase subunit beta</fullName>
        <shortName evidence="1">RNAP subunit beta</shortName>
        <ecNumber evidence="1">2.7.7.6</ecNumber>
    </recommendedName>
    <alternativeName>
        <fullName evidence="1">RNA polymerase subunit beta</fullName>
    </alternativeName>
    <alternativeName>
        <fullName evidence="1">Transcriptase subunit beta</fullName>
    </alternativeName>
</protein>
<sequence length="1178" mass="129728">MLEGCILPDFGQSKTDVSPSQSRPQSSPNNSVPGAPNRISFAKLREPLEVPGLLDVQTDSFEWLIGSPCWRAAAASRGDLKPVGGLEEVLYELSPIEDFSGSMSLSFSDPRFDEVKAPVEECKDKDMTYAAPLFVTAEFINNNTGEIKSQTVFMGDFPMMTEKGTFIINGTERVVVSQLVRSPGVYFDETIDKSTEKTLHSVKVIPSRGAWLEFDVDKRDTVGVRIDRKRRQPVTVLLKALGWTSEQITERFGFSEIMRSTLEKDNTVGTDEALLDIYRKLRPGEPPTKESAQTLLENLFFKEKRYDLARVGRYKVNKKLGLHAGELITSSTLTEEDVVATIEYLVRLHEGQSTMTVPGGVEVPVETDDIDHFGNRRLRTVGELIQNQIRVGMSRMERVVRERMTTQDVEAITPQTLINIRPVVAAIKEFFGTSQLSQFMDQNNPLSGLTHKRRLSALGPGGLSRERAGLEVRDVHPSHYGRMCPIETPEGPNIGLIGSLSVYARVNPFGFIETPYRKVVDGVVSDEIEYLTADEEDRHVVAQANSPIDEAGRFLEPRVLVRRKAGEVEYVASSEVDYMDVSPRQMVSVATAMIPFLEHDDANRALMGANMQRQAVPLVRSEAPLVGTGMELRAAIDAGHVVVAEKSGVIEEVSADYITVMADDGTRRTYRMRKFARSNHGTCANQSPIVDAGDRVEAGQVIADGPCTENGEMALGKNLLVAIMPWEGHNYEDAIILSNRLVEEDVLTSIHIEEHEIDARDTKLGAEEITRDIPNVSDEVLADLDERGIVRIGAEVRDGDILVGKVTPKGETELTPEERLLRAIFGEKAREVRDTSLKVPHGESGKVIGIRVFSHEDDDELPAGVNELVRVYVAQKRKISDGDKLAGRHGNKGVIGKILPAEDMPFLPDGTPVDIILNTHGVPRRMNVGQILETHLGWVAKSGWKIDVAGGIPDWAVNLPEELLHAAPNQIVSTPVFDGAKEEELQGLLSSTLPNRDGDVMVGGDGKAVLFDGRSGEPFPYPVTVGYMYIMKLHHLVDDKIHARSTGPYSMITQQPLGGKAQFGGQRFGEMECWAMQAYGAAYTLQELLTIKSDDTVGRVKVYEAIVKGENIPEPGIPESFKVLLKELQSLCLNVEVLSSDGAAIELREGEDEDLERAAANLGINLSRNESASIEDLA</sequence>
<proteinExistence type="inferred from homology"/>
<name>RPOB_MYCLE</name>
<dbReference type="EC" id="2.7.7.6" evidence="1"/>
<dbReference type="EMBL" id="Z14314">
    <property type="protein sequence ID" value="CAA78668.1"/>
    <property type="molecule type" value="Genomic_DNA"/>
</dbReference>
<dbReference type="EMBL" id="AL583923">
    <property type="protein sequence ID" value="CAC30845.1"/>
    <property type="molecule type" value="Genomic_DNA"/>
</dbReference>
<dbReference type="PIR" id="E87145">
    <property type="entry name" value="E87145"/>
</dbReference>
<dbReference type="PIR" id="S31145">
    <property type="entry name" value="S31145"/>
</dbReference>
<dbReference type="RefSeq" id="NP_302273.1">
    <property type="nucleotide sequence ID" value="NC_002677.1"/>
</dbReference>
<dbReference type="SMR" id="P30760"/>
<dbReference type="STRING" id="272631.gene:17575739"/>
<dbReference type="KEGG" id="mle:ML1891"/>
<dbReference type="PATRIC" id="fig|272631.5.peg.3581"/>
<dbReference type="Leproma" id="ML1891"/>
<dbReference type="eggNOG" id="COG0085">
    <property type="taxonomic scope" value="Bacteria"/>
</dbReference>
<dbReference type="HOGENOM" id="CLU_000524_4_1_11"/>
<dbReference type="OrthoDB" id="9803954at2"/>
<dbReference type="Proteomes" id="UP000000806">
    <property type="component" value="Chromosome"/>
</dbReference>
<dbReference type="GO" id="GO:0000428">
    <property type="term" value="C:DNA-directed RNA polymerase complex"/>
    <property type="evidence" value="ECO:0007669"/>
    <property type="project" value="UniProtKB-KW"/>
</dbReference>
<dbReference type="GO" id="GO:0003677">
    <property type="term" value="F:DNA binding"/>
    <property type="evidence" value="ECO:0007669"/>
    <property type="project" value="UniProtKB-UniRule"/>
</dbReference>
<dbReference type="GO" id="GO:0003899">
    <property type="term" value="F:DNA-directed RNA polymerase activity"/>
    <property type="evidence" value="ECO:0007669"/>
    <property type="project" value="UniProtKB-UniRule"/>
</dbReference>
<dbReference type="GO" id="GO:0032549">
    <property type="term" value="F:ribonucleoside binding"/>
    <property type="evidence" value="ECO:0007669"/>
    <property type="project" value="InterPro"/>
</dbReference>
<dbReference type="GO" id="GO:0006351">
    <property type="term" value="P:DNA-templated transcription"/>
    <property type="evidence" value="ECO:0007669"/>
    <property type="project" value="UniProtKB-UniRule"/>
</dbReference>
<dbReference type="CDD" id="cd00653">
    <property type="entry name" value="RNA_pol_B_RPB2"/>
    <property type="match status" value="1"/>
</dbReference>
<dbReference type="FunFam" id="3.90.1800.10:FF:000005">
    <property type="entry name" value="DNA-directed RNA polymerase subunit beta"/>
    <property type="match status" value="1"/>
</dbReference>
<dbReference type="Gene3D" id="2.40.50.100">
    <property type="match status" value="1"/>
</dbReference>
<dbReference type="Gene3D" id="2.40.50.150">
    <property type="match status" value="1"/>
</dbReference>
<dbReference type="Gene3D" id="3.90.1100.10">
    <property type="match status" value="1"/>
</dbReference>
<dbReference type="Gene3D" id="2.30.150.10">
    <property type="entry name" value="DNA-directed RNA polymerase, beta subunit, external 1 domain"/>
    <property type="match status" value="1"/>
</dbReference>
<dbReference type="Gene3D" id="2.40.270.10">
    <property type="entry name" value="DNA-directed RNA polymerase, subunit 2, domain 6"/>
    <property type="match status" value="1"/>
</dbReference>
<dbReference type="Gene3D" id="3.90.1800.10">
    <property type="entry name" value="RNA polymerase alpha subunit dimerisation domain"/>
    <property type="match status" value="1"/>
</dbReference>
<dbReference type="Gene3D" id="3.90.1110.10">
    <property type="entry name" value="RNA polymerase Rpb2, domain 2"/>
    <property type="match status" value="1"/>
</dbReference>
<dbReference type="HAMAP" id="MF_01321">
    <property type="entry name" value="RNApol_bact_RpoB"/>
    <property type="match status" value="1"/>
</dbReference>
<dbReference type="InterPro" id="IPR042107">
    <property type="entry name" value="DNA-dir_RNA_pol_bsu_ext_1_sf"/>
</dbReference>
<dbReference type="InterPro" id="IPR019462">
    <property type="entry name" value="DNA-dir_RNA_pol_bsu_external_1"/>
</dbReference>
<dbReference type="InterPro" id="IPR015712">
    <property type="entry name" value="DNA-dir_RNA_pol_su2"/>
</dbReference>
<dbReference type="InterPro" id="IPR007120">
    <property type="entry name" value="DNA-dir_RNAP_su2_dom"/>
</dbReference>
<dbReference type="InterPro" id="IPR037033">
    <property type="entry name" value="DNA-dir_RNAP_su2_hyb_sf"/>
</dbReference>
<dbReference type="InterPro" id="IPR010243">
    <property type="entry name" value="RNA_pol_bsu_bac"/>
</dbReference>
<dbReference type="InterPro" id="IPR007121">
    <property type="entry name" value="RNA_pol_bsu_CS"/>
</dbReference>
<dbReference type="InterPro" id="IPR007644">
    <property type="entry name" value="RNA_pol_bsu_protrusion"/>
</dbReference>
<dbReference type="InterPro" id="IPR007642">
    <property type="entry name" value="RNA_pol_Rpb2_2"/>
</dbReference>
<dbReference type="InterPro" id="IPR037034">
    <property type="entry name" value="RNA_pol_Rpb2_2_sf"/>
</dbReference>
<dbReference type="InterPro" id="IPR007645">
    <property type="entry name" value="RNA_pol_Rpb2_3"/>
</dbReference>
<dbReference type="InterPro" id="IPR007641">
    <property type="entry name" value="RNA_pol_Rpb2_7"/>
</dbReference>
<dbReference type="InterPro" id="IPR014724">
    <property type="entry name" value="RNA_pol_RPB2_OB-fold"/>
</dbReference>
<dbReference type="NCBIfam" id="NF001616">
    <property type="entry name" value="PRK00405.1"/>
    <property type="match status" value="1"/>
</dbReference>
<dbReference type="NCBIfam" id="TIGR02013">
    <property type="entry name" value="rpoB"/>
    <property type="match status" value="1"/>
</dbReference>
<dbReference type="PANTHER" id="PTHR20856">
    <property type="entry name" value="DNA-DIRECTED RNA POLYMERASE I SUBUNIT 2"/>
    <property type="match status" value="1"/>
</dbReference>
<dbReference type="Pfam" id="PF04563">
    <property type="entry name" value="RNA_pol_Rpb2_1"/>
    <property type="match status" value="1"/>
</dbReference>
<dbReference type="Pfam" id="PF04561">
    <property type="entry name" value="RNA_pol_Rpb2_2"/>
    <property type="match status" value="1"/>
</dbReference>
<dbReference type="Pfam" id="PF04565">
    <property type="entry name" value="RNA_pol_Rpb2_3"/>
    <property type="match status" value="1"/>
</dbReference>
<dbReference type="Pfam" id="PF10385">
    <property type="entry name" value="RNA_pol_Rpb2_45"/>
    <property type="match status" value="1"/>
</dbReference>
<dbReference type="Pfam" id="PF00562">
    <property type="entry name" value="RNA_pol_Rpb2_6"/>
    <property type="match status" value="1"/>
</dbReference>
<dbReference type="Pfam" id="PF04560">
    <property type="entry name" value="RNA_pol_Rpb2_7"/>
    <property type="match status" value="1"/>
</dbReference>
<dbReference type="SUPFAM" id="SSF64484">
    <property type="entry name" value="beta and beta-prime subunits of DNA dependent RNA-polymerase"/>
    <property type="match status" value="1"/>
</dbReference>
<dbReference type="PROSITE" id="PS01166">
    <property type="entry name" value="RNA_POL_BETA"/>
    <property type="match status" value="1"/>
</dbReference>
<organism>
    <name type="scientific">Mycobacterium leprae (strain TN)</name>
    <dbReference type="NCBI Taxonomy" id="272631"/>
    <lineage>
        <taxon>Bacteria</taxon>
        <taxon>Bacillati</taxon>
        <taxon>Actinomycetota</taxon>
        <taxon>Actinomycetes</taxon>
        <taxon>Mycobacteriales</taxon>
        <taxon>Mycobacteriaceae</taxon>
        <taxon>Mycobacterium</taxon>
    </lineage>
</organism>